<gene>
    <name evidence="1" type="primary">glk</name>
    <name type="ordered locus">E2348C_2581</name>
</gene>
<organism>
    <name type="scientific">Escherichia coli O127:H6 (strain E2348/69 / EPEC)</name>
    <dbReference type="NCBI Taxonomy" id="574521"/>
    <lineage>
        <taxon>Bacteria</taxon>
        <taxon>Pseudomonadati</taxon>
        <taxon>Pseudomonadota</taxon>
        <taxon>Gammaproteobacteria</taxon>
        <taxon>Enterobacterales</taxon>
        <taxon>Enterobacteriaceae</taxon>
        <taxon>Escherichia</taxon>
    </lineage>
</organism>
<comment type="catalytic activity">
    <reaction evidence="1">
        <text>D-glucose + ATP = D-glucose 6-phosphate + ADP + H(+)</text>
        <dbReference type="Rhea" id="RHEA:17825"/>
        <dbReference type="ChEBI" id="CHEBI:4167"/>
        <dbReference type="ChEBI" id="CHEBI:15378"/>
        <dbReference type="ChEBI" id="CHEBI:30616"/>
        <dbReference type="ChEBI" id="CHEBI:61548"/>
        <dbReference type="ChEBI" id="CHEBI:456216"/>
        <dbReference type="EC" id="2.7.1.2"/>
    </reaction>
</comment>
<comment type="subcellular location">
    <subcellularLocation>
        <location evidence="1">Cytoplasm</location>
    </subcellularLocation>
</comment>
<comment type="similarity">
    <text evidence="1">Belongs to the bacterial glucokinase family.</text>
</comment>
<dbReference type="EC" id="2.7.1.2" evidence="1"/>
<dbReference type="EMBL" id="FM180568">
    <property type="protein sequence ID" value="CAS10129.1"/>
    <property type="molecule type" value="Genomic_DNA"/>
</dbReference>
<dbReference type="RefSeq" id="WP_000170355.1">
    <property type="nucleotide sequence ID" value="NC_011601.1"/>
</dbReference>
<dbReference type="SMR" id="B7UG97"/>
<dbReference type="KEGG" id="ecg:E2348C_2581"/>
<dbReference type="HOGENOM" id="CLU_042582_1_0_6"/>
<dbReference type="Proteomes" id="UP000008205">
    <property type="component" value="Chromosome"/>
</dbReference>
<dbReference type="GO" id="GO:0005829">
    <property type="term" value="C:cytosol"/>
    <property type="evidence" value="ECO:0007669"/>
    <property type="project" value="TreeGrafter"/>
</dbReference>
<dbReference type="GO" id="GO:0005524">
    <property type="term" value="F:ATP binding"/>
    <property type="evidence" value="ECO:0007669"/>
    <property type="project" value="UniProtKB-UniRule"/>
</dbReference>
<dbReference type="GO" id="GO:0005536">
    <property type="term" value="F:D-glucose binding"/>
    <property type="evidence" value="ECO:0007669"/>
    <property type="project" value="InterPro"/>
</dbReference>
<dbReference type="GO" id="GO:0004340">
    <property type="term" value="F:glucokinase activity"/>
    <property type="evidence" value="ECO:0007669"/>
    <property type="project" value="UniProtKB-UniRule"/>
</dbReference>
<dbReference type="GO" id="GO:0006096">
    <property type="term" value="P:glycolytic process"/>
    <property type="evidence" value="ECO:0007669"/>
    <property type="project" value="UniProtKB-UniRule"/>
</dbReference>
<dbReference type="CDD" id="cd24008">
    <property type="entry name" value="ASKHA_NBD_GLK"/>
    <property type="match status" value="1"/>
</dbReference>
<dbReference type="FunFam" id="3.30.420.40:FF:000045">
    <property type="entry name" value="Glucokinase"/>
    <property type="match status" value="1"/>
</dbReference>
<dbReference type="FunFam" id="3.40.367.20:FF:000002">
    <property type="entry name" value="Glucokinase"/>
    <property type="match status" value="1"/>
</dbReference>
<dbReference type="Gene3D" id="3.30.420.40">
    <property type="match status" value="1"/>
</dbReference>
<dbReference type="Gene3D" id="3.40.367.20">
    <property type="match status" value="1"/>
</dbReference>
<dbReference type="HAMAP" id="MF_00524">
    <property type="entry name" value="Glucokinase"/>
    <property type="match status" value="1"/>
</dbReference>
<dbReference type="InterPro" id="IPR043129">
    <property type="entry name" value="ATPase_NBD"/>
</dbReference>
<dbReference type="InterPro" id="IPR050201">
    <property type="entry name" value="Bacterial_glucokinase"/>
</dbReference>
<dbReference type="InterPro" id="IPR003836">
    <property type="entry name" value="Glucokinase"/>
</dbReference>
<dbReference type="NCBIfam" id="TIGR00749">
    <property type="entry name" value="glk"/>
    <property type="match status" value="1"/>
</dbReference>
<dbReference type="NCBIfam" id="NF001414">
    <property type="entry name" value="PRK00292.1-1"/>
    <property type="match status" value="1"/>
</dbReference>
<dbReference type="NCBIfam" id="NF001416">
    <property type="entry name" value="PRK00292.1-3"/>
    <property type="match status" value="1"/>
</dbReference>
<dbReference type="PANTHER" id="PTHR47690">
    <property type="entry name" value="GLUCOKINASE"/>
    <property type="match status" value="1"/>
</dbReference>
<dbReference type="PANTHER" id="PTHR47690:SF1">
    <property type="entry name" value="GLUCOKINASE"/>
    <property type="match status" value="1"/>
</dbReference>
<dbReference type="Pfam" id="PF02685">
    <property type="entry name" value="Glucokinase"/>
    <property type="match status" value="1"/>
</dbReference>
<dbReference type="SUPFAM" id="SSF53067">
    <property type="entry name" value="Actin-like ATPase domain"/>
    <property type="match status" value="1"/>
</dbReference>
<accession>B7UG97</accession>
<feature type="chain" id="PRO_1000146250" description="Glucokinase">
    <location>
        <begin position="1"/>
        <end position="321"/>
    </location>
</feature>
<feature type="binding site" evidence="1">
    <location>
        <begin position="8"/>
        <end position="13"/>
    </location>
    <ligand>
        <name>ATP</name>
        <dbReference type="ChEBI" id="CHEBI:30616"/>
    </ligand>
</feature>
<name>GLK_ECO27</name>
<evidence type="ECO:0000255" key="1">
    <source>
        <dbReference type="HAMAP-Rule" id="MF_00524"/>
    </source>
</evidence>
<reference key="1">
    <citation type="journal article" date="2009" name="J. Bacteriol.">
        <title>Complete genome sequence and comparative genome analysis of enteropathogenic Escherichia coli O127:H6 strain E2348/69.</title>
        <authorList>
            <person name="Iguchi A."/>
            <person name="Thomson N.R."/>
            <person name="Ogura Y."/>
            <person name="Saunders D."/>
            <person name="Ooka T."/>
            <person name="Henderson I.R."/>
            <person name="Harris D."/>
            <person name="Asadulghani M."/>
            <person name="Kurokawa K."/>
            <person name="Dean P."/>
            <person name="Kenny B."/>
            <person name="Quail M.A."/>
            <person name="Thurston S."/>
            <person name="Dougan G."/>
            <person name="Hayashi T."/>
            <person name="Parkhill J."/>
            <person name="Frankel G."/>
        </authorList>
    </citation>
    <scope>NUCLEOTIDE SEQUENCE [LARGE SCALE GENOMIC DNA]</scope>
    <source>
        <strain>E2348/69 / EPEC</strain>
    </source>
</reference>
<proteinExistence type="inferred from homology"/>
<sequence>MTKYALVGDVGGTNARLALCDIASGEISQAKTYSGLDYPSLEAVIRVYLEEHKVEVKDGCIAIACPITGDWVAMTNHTWAFSIAEMKKNLGFSHLEIINDFTAVSMAIPMLKKEHLIQFGGAEPVEGKPIAVYGAGTGLGVAHLVHVDKRWVSLPGEGGHVDFAPNSEEEGIILEILRAEIGHVSAERVLSGPGLVNLYRAIVKADNRLPENLKPKDITERALADSCTDCRRALSLFCVIMGRFGGNLALNLGTFGGVFIAGGIVPRFLEFFKASGFRAAFEDKGRFKEYVHDIPVYLIVHDNPGLLGSGAHLRQTLGHIL</sequence>
<keyword id="KW-0067">ATP-binding</keyword>
<keyword id="KW-0963">Cytoplasm</keyword>
<keyword id="KW-0324">Glycolysis</keyword>
<keyword id="KW-0418">Kinase</keyword>
<keyword id="KW-0547">Nucleotide-binding</keyword>
<keyword id="KW-1185">Reference proteome</keyword>
<keyword id="KW-0808">Transferase</keyword>
<protein>
    <recommendedName>
        <fullName evidence="1">Glucokinase</fullName>
        <ecNumber evidence="1">2.7.1.2</ecNumber>
    </recommendedName>
    <alternativeName>
        <fullName evidence="1">Glucose kinase</fullName>
    </alternativeName>
</protein>